<reference key="1">
    <citation type="submission" date="2008-06" db="EMBL/GenBank/DDBJ databases">
        <title>Complete sequence of Pelodictyon phaeoclathratiforme BU-1.</title>
        <authorList>
            <consortium name="US DOE Joint Genome Institute"/>
            <person name="Lucas S."/>
            <person name="Copeland A."/>
            <person name="Lapidus A."/>
            <person name="Glavina del Rio T."/>
            <person name="Dalin E."/>
            <person name="Tice H."/>
            <person name="Bruce D."/>
            <person name="Goodwin L."/>
            <person name="Pitluck S."/>
            <person name="Schmutz J."/>
            <person name="Larimer F."/>
            <person name="Land M."/>
            <person name="Hauser L."/>
            <person name="Kyrpides N."/>
            <person name="Mikhailova N."/>
            <person name="Liu Z."/>
            <person name="Li T."/>
            <person name="Zhao F."/>
            <person name="Overmann J."/>
            <person name="Bryant D.A."/>
            <person name="Richardson P."/>
        </authorList>
    </citation>
    <scope>NUCLEOTIDE SEQUENCE [LARGE SCALE GENOMIC DNA]</scope>
    <source>
        <strain>DSM 5477 / BU-1</strain>
    </source>
</reference>
<name>KCY_PELPB</name>
<evidence type="ECO:0000255" key="1">
    <source>
        <dbReference type="HAMAP-Rule" id="MF_00238"/>
    </source>
</evidence>
<evidence type="ECO:0000256" key="2">
    <source>
        <dbReference type="SAM" id="MobiDB-lite"/>
    </source>
</evidence>
<gene>
    <name evidence="1" type="primary">cmk</name>
    <name type="ordered locus">Ppha_0451</name>
</gene>
<proteinExistence type="inferred from homology"/>
<keyword id="KW-0067">ATP-binding</keyword>
<keyword id="KW-0963">Cytoplasm</keyword>
<keyword id="KW-0418">Kinase</keyword>
<keyword id="KW-0547">Nucleotide-binding</keyword>
<keyword id="KW-1185">Reference proteome</keyword>
<keyword id="KW-0808">Transferase</keyword>
<comment type="catalytic activity">
    <reaction evidence="1">
        <text>CMP + ATP = CDP + ADP</text>
        <dbReference type="Rhea" id="RHEA:11600"/>
        <dbReference type="ChEBI" id="CHEBI:30616"/>
        <dbReference type="ChEBI" id="CHEBI:58069"/>
        <dbReference type="ChEBI" id="CHEBI:60377"/>
        <dbReference type="ChEBI" id="CHEBI:456216"/>
        <dbReference type="EC" id="2.7.4.25"/>
    </reaction>
</comment>
<comment type="catalytic activity">
    <reaction evidence="1">
        <text>dCMP + ATP = dCDP + ADP</text>
        <dbReference type="Rhea" id="RHEA:25094"/>
        <dbReference type="ChEBI" id="CHEBI:30616"/>
        <dbReference type="ChEBI" id="CHEBI:57566"/>
        <dbReference type="ChEBI" id="CHEBI:58593"/>
        <dbReference type="ChEBI" id="CHEBI:456216"/>
        <dbReference type="EC" id="2.7.4.25"/>
    </reaction>
</comment>
<comment type="subcellular location">
    <subcellularLocation>
        <location evidence="1">Cytoplasm</location>
    </subcellularLocation>
</comment>
<comment type="similarity">
    <text evidence="1">Belongs to the cytidylate kinase family. Type 1 subfamily.</text>
</comment>
<accession>B4SCU3</accession>
<feature type="chain" id="PRO_1000100671" description="Cytidylate kinase">
    <location>
        <begin position="1"/>
        <end position="231"/>
    </location>
</feature>
<feature type="region of interest" description="Disordered" evidence="2">
    <location>
        <begin position="176"/>
        <end position="205"/>
    </location>
</feature>
<feature type="compositionally biased region" description="Basic and acidic residues" evidence="2">
    <location>
        <begin position="184"/>
        <end position="205"/>
    </location>
</feature>
<feature type="binding site" evidence="1">
    <location>
        <begin position="16"/>
        <end position="24"/>
    </location>
    <ligand>
        <name>ATP</name>
        <dbReference type="ChEBI" id="CHEBI:30616"/>
    </ligand>
</feature>
<protein>
    <recommendedName>
        <fullName evidence="1">Cytidylate kinase</fullName>
        <shortName evidence="1">CK</shortName>
        <ecNumber evidence="1">2.7.4.25</ecNumber>
    </recommendedName>
    <alternativeName>
        <fullName evidence="1">Cytidine monophosphate kinase</fullName>
        <shortName evidence="1">CMP kinase</shortName>
    </alternativeName>
</protein>
<sequence>MKQETGKKRIIIAIDGPAASGKSTTARKVAHLLGYTYIDTGAMYRSVTLKALKQGVLDSLHHSPESVSGLLHDIVIHFEGDHVFLDGEDVTAEIRSNQVSREVSFISSLKPVRDRLREMQQHLGRQRGVVMDGRDIGTVVFPDAELKIYLVADARERAKRRHAELTAKSAEGVELPDLDSLEQEITKRDRDDAEREHAPLKKHPEAYEIDTSAMTIERQVEMVCQLARARE</sequence>
<organism>
    <name type="scientific">Pelodictyon phaeoclathratiforme (strain DSM 5477 / BU-1)</name>
    <dbReference type="NCBI Taxonomy" id="324925"/>
    <lineage>
        <taxon>Bacteria</taxon>
        <taxon>Pseudomonadati</taxon>
        <taxon>Chlorobiota</taxon>
        <taxon>Chlorobiia</taxon>
        <taxon>Chlorobiales</taxon>
        <taxon>Chlorobiaceae</taxon>
        <taxon>Chlorobium/Pelodictyon group</taxon>
        <taxon>Pelodictyon</taxon>
    </lineage>
</organism>
<dbReference type="EC" id="2.7.4.25" evidence="1"/>
<dbReference type="EMBL" id="CP001110">
    <property type="protein sequence ID" value="ACF42777.1"/>
    <property type="molecule type" value="Genomic_DNA"/>
</dbReference>
<dbReference type="RefSeq" id="WP_012507272.1">
    <property type="nucleotide sequence ID" value="NC_011060.1"/>
</dbReference>
<dbReference type="SMR" id="B4SCU3"/>
<dbReference type="STRING" id="324925.Ppha_0451"/>
<dbReference type="KEGG" id="pph:Ppha_0451"/>
<dbReference type="eggNOG" id="COG0283">
    <property type="taxonomic scope" value="Bacteria"/>
</dbReference>
<dbReference type="HOGENOM" id="CLU_079959_0_2_10"/>
<dbReference type="OrthoDB" id="9807434at2"/>
<dbReference type="Proteomes" id="UP000002724">
    <property type="component" value="Chromosome"/>
</dbReference>
<dbReference type="GO" id="GO:0005829">
    <property type="term" value="C:cytosol"/>
    <property type="evidence" value="ECO:0007669"/>
    <property type="project" value="TreeGrafter"/>
</dbReference>
<dbReference type="GO" id="GO:0005524">
    <property type="term" value="F:ATP binding"/>
    <property type="evidence" value="ECO:0007669"/>
    <property type="project" value="UniProtKB-UniRule"/>
</dbReference>
<dbReference type="GO" id="GO:0036430">
    <property type="term" value="F:CMP kinase activity"/>
    <property type="evidence" value="ECO:0007669"/>
    <property type="project" value="RHEA"/>
</dbReference>
<dbReference type="GO" id="GO:0036431">
    <property type="term" value="F:dCMP kinase activity"/>
    <property type="evidence" value="ECO:0007669"/>
    <property type="project" value="RHEA"/>
</dbReference>
<dbReference type="GO" id="GO:0015949">
    <property type="term" value="P:nucleobase-containing small molecule interconversion"/>
    <property type="evidence" value="ECO:0007669"/>
    <property type="project" value="TreeGrafter"/>
</dbReference>
<dbReference type="GO" id="GO:0006220">
    <property type="term" value="P:pyrimidine nucleotide metabolic process"/>
    <property type="evidence" value="ECO:0007669"/>
    <property type="project" value="UniProtKB-UniRule"/>
</dbReference>
<dbReference type="CDD" id="cd02020">
    <property type="entry name" value="CMPK"/>
    <property type="match status" value="1"/>
</dbReference>
<dbReference type="CDD" id="cd02019">
    <property type="entry name" value="NK"/>
    <property type="match status" value="1"/>
</dbReference>
<dbReference type="Gene3D" id="3.40.50.300">
    <property type="entry name" value="P-loop containing nucleotide triphosphate hydrolases"/>
    <property type="match status" value="1"/>
</dbReference>
<dbReference type="HAMAP" id="MF_00238">
    <property type="entry name" value="Cytidyl_kinase_type1"/>
    <property type="match status" value="1"/>
</dbReference>
<dbReference type="InterPro" id="IPR003136">
    <property type="entry name" value="Cytidylate_kin"/>
</dbReference>
<dbReference type="InterPro" id="IPR011994">
    <property type="entry name" value="Cytidylate_kinase_dom"/>
</dbReference>
<dbReference type="InterPro" id="IPR027417">
    <property type="entry name" value="P-loop_NTPase"/>
</dbReference>
<dbReference type="NCBIfam" id="TIGR00017">
    <property type="entry name" value="cmk"/>
    <property type="match status" value="1"/>
</dbReference>
<dbReference type="PANTHER" id="PTHR21299:SF2">
    <property type="entry name" value="CYTIDYLATE KINASE"/>
    <property type="match status" value="1"/>
</dbReference>
<dbReference type="PANTHER" id="PTHR21299">
    <property type="entry name" value="CYTIDYLATE KINASE/PANTOATE-BETA-ALANINE LIGASE"/>
    <property type="match status" value="1"/>
</dbReference>
<dbReference type="Pfam" id="PF02224">
    <property type="entry name" value="Cytidylate_kin"/>
    <property type="match status" value="1"/>
</dbReference>
<dbReference type="SUPFAM" id="SSF52540">
    <property type="entry name" value="P-loop containing nucleoside triphosphate hydrolases"/>
    <property type="match status" value="1"/>
</dbReference>